<feature type="chain" id="PRO_0000160552" description="ATP-dependent protease ATPase subunit HslU">
    <location>
        <begin position="1"/>
        <end position="467"/>
    </location>
</feature>
<feature type="region of interest" description="Disordered" evidence="2">
    <location>
        <begin position="149"/>
        <end position="192"/>
    </location>
</feature>
<feature type="compositionally biased region" description="Basic and acidic residues" evidence="2">
    <location>
        <begin position="178"/>
        <end position="192"/>
    </location>
</feature>
<feature type="binding site" evidence="1">
    <location>
        <position position="22"/>
    </location>
    <ligand>
        <name>ATP</name>
        <dbReference type="ChEBI" id="CHEBI:30616"/>
    </ligand>
</feature>
<feature type="binding site" evidence="1">
    <location>
        <begin position="64"/>
        <end position="69"/>
    </location>
    <ligand>
        <name>ATP</name>
        <dbReference type="ChEBI" id="CHEBI:30616"/>
    </ligand>
</feature>
<feature type="binding site" evidence="1">
    <location>
        <position position="280"/>
    </location>
    <ligand>
        <name>ATP</name>
        <dbReference type="ChEBI" id="CHEBI:30616"/>
    </ligand>
</feature>
<feature type="binding site" evidence="1">
    <location>
        <position position="345"/>
    </location>
    <ligand>
        <name>ATP</name>
        <dbReference type="ChEBI" id="CHEBI:30616"/>
    </ligand>
</feature>
<feature type="binding site" evidence="1">
    <location>
        <position position="417"/>
    </location>
    <ligand>
        <name>ATP</name>
        <dbReference type="ChEBI" id="CHEBI:30616"/>
    </ligand>
</feature>
<accession>Q8NWZ7</accession>
<dbReference type="EMBL" id="BA000033">
    <property type="protein sequence ID" value="BAB95002.1"/>
    <property type="molecule type" value="Genomic_DNA"/>
</dbReference>
<dbReference type="RefSeq" id="WP_000379054.1">
    <property type="nucleotide sequence ID" value="NC_003923.1"/>
</dbReference>
<dbReference type="SMR" id="Q8NWZ7"/>
<dbReference type="KEGG" id="sam:MW1137"/>
<dbReference type="HOGENOM" id="CLU_033123_0_0_9"/>
<dbReference type="GO" id="GO:0009376">
    <property type="term" value="C:HslUV protease complex"/>
    <property type="evidence" value="ECO:0007669"/>
    <property type="project" value="UniProtKB-UniRule"/>
</dbReference>
<dbReference type="GO" id="GO:0005524">
    <property type="term" value="F:ATP binding"/>
    <property type="evidence" value="ECO:0007669"/>
    <property type="project" value="UniProtKB-UniRule"/>
</dbReference>
<dbReference type="GO" id="GO:0016887">
    <property type="term" value="F:ATP hydrolysis activity"/>
    <property type="evidence" value="ECO:0007669"/>
    <property type="project" value="InterPro"/>
</dbReference>
<dbReference type="GO" id="GO:0008233">
    <property type="term" value="F:peptidase activity"/>
    <property type="evidence" value="ECO:0007669"/>
    <property type="project" value="InterPro"/>
</dbReference>
<dbReference type="GO" id="GO:0036402">
    <property type="term" value="F:proteasome-activating activity"/>
    <property type="evidence" value="ECO:0007669"/>
    <property type="project" value="UniProtKB-UniRule"/>
</dbReference>
<dbReference type="GO" id="GO:0043335">
    <property type="term" value="P:protein unfolding"/>
    <property type="evidence" value="ECO:0007669"/>
    <property type="project" value="UniProtKB-UniRule"/>
</dbReference>
<dbReference type="GO" id="GO:0051603">
    <property type="term" value="P:proteolysis involved in protein catabolic process"/>
    <property type="evidence" value="ECO:0007669"/>
    <property type="project" value="TreeGrafter"/>
</dbReference>
<dbReference type="CDD" id="cd19498">
    <property type="entry name" value="RecA-like_HslU"/>
    <property type="match status" value="1"/>
</dbReference>
<dbReference type="FunFam" id="3.40.50.300:FF:000220">
    <property type="entry name" value="ATP-dependent protease ATPase subunit HslU"/>
    <property type="match status" value="1"/>
</dbReference>
<dbReference type="Gene3D" id="1.10.8.60">
    <property type="match status" value="1"/>
</dbReference>
<dbReference type="Gene3D" id="1.10.8.10">
    <property type="entry name" value="DNA helicase RuvA subunit, C-terminal domain"/>
    <property type="match status" value="1"/>
</dbReference>
<dbReference type="Gene3D" id="3.40.50.300">
    <property type="entry name" value="P-loop containing nucleotide triphosphate hydrolases"/>
    <property type="match status" value="2"/>
</dbReference>
<dbReference type="HAMAP" id="MF_00249">
    <property type="entry name" value="HslU"/>
    <property type="match status" value="1"/>
</dbReference>
<dbReference type="InterPro" id="IPR003593">
    <property type="entry name" value="AAA+_ATPase"/>
</dbReference>
<dbReference type="InterPro" id="IPR050052">
    <property type="entry name" value="ATP-dep_Clp_protease_ClpX"/>
</dbReference>
<dbReference type="InterPro" id="IPR003959">
    <property type="entry name" value="ATPase_AAA_core"/>
</dbReference>
<dbReference type="InterPro" id="IPR019489">
    <property type="entry name" value="Clp_ATPase_C"/>
</dbReference>
<dbReference type="InterPro" id="IPR004491">
    <property type="entry name" value="HslU"/>
</dbReference>
<dbReference type="InterPro" id="IPR027417">
    <property type="entry name" value="P-loop_NTPase"/>
</dbReference>
<dbReference type="NCBIfam" id="TIGR00390">
    <property type="entry name" value="hslU"/>
    <property type="match status" value="1"/>
</dbReference>
<dbReference type="NCBIfam" id="NF003544">
    <property type="entry name" value="PRK05201.1"/>
    <property type="match status" value="1"/>
</dbReference>
<dbReference type="PANTHER" id="PTHR48102">
    <property type="entry name" value="ATP-DEPENDENT CLP PROTEASE ATP-BINDING SUBUNIT CLPX-LIKE, MITOCHONDRIAL-RELATED"/>
    <property type="match status" value="1"/>
</dbReference>
<dbReference type="PANTHER" id="PTHR48102:SF3">
    <property type="entry name" value="ATP-DEPENDENT PROTEASE ATPASE SUBUNIT HSLU"/>
    <property type="match status" value="1"/>
</dbReference>
<dbReference type="Pfam" id="PF00004">
    <property type="entry name" value="AAA"/>
    <property type="match status" value="1"/>
</dbReference>
<dbReference type="Pfam" id="PF07724">
    <property type="entry name" value="AAA_2"/>
    <property type="match status" value="1"/>
</dbReference>
<dbReference type="Pfam" id="PF10431">
    <property type="entry name" value="ClpB_D2-small"/>
    <property type="match status" value="1"/>
</dbReference>
<dbReference type="SMART" id="SM00382">
    <property type="entry name" value="AAA"/>
    <property type="match status" value="1"/>
</dbReference>
<dbReference type="SMART" id="SM01086">
    <property type="entry name" value="ClpB_D2-small"/>
    <property type="match status" value="1"/>
</dbReference>
<dbReference type="SUPFAM" id="SSF52540">
    <property type="entry name" value="P-loop containing nucleoside triphosphate hydrolases"/>
    <property type="match status" value="1"/>
</dbReference>
<keyword id="KW-0067">ATP-binding</keyword>
<keyword id="KW-0143">Chaperone</keyword>
<keyword id="KW-0963">Cytoplasm</keyword>
<keyword id="KW-0547">Nucleotide-binding</keyword>
<sequence length="467" mass="52315">MDTAGIRLTPKEIVSKLNEYIVGQNDAKRKVAIALRNRYRRSLLDEESKQEISPKNILMIGPTGVGKTEIARRMAKVVGAPFIKVEATKFTEVGYVGRDVESMVRDLVDVSVRLVKAQKKSLVQDEATAKANEKLVKLLVPSMKKKASQTNNPLESLFGGAIPNFGQNNEDEEEPPTEEIKTKRSEIKRQLEEGKLEKEKVRIKVEQDPGALGMLGTNQNQQMQEMMNQLMPKKKVEREVAVETARKILADSYADELIDQESANQEALELAEQMGIIFIDEIDKVATNNHNSGQDVSRQGVQRDILPILEGSVIQTKYGTVNTEHMLFIGAGAFHVSKPSDLIPELQGRFPIRVELDSLSVEDFVRILTEPKLSLIKQYEALLQTEEVTVNFTDEAITRLAEIAYQVNQDTDNIGARRLHTILEKMLEDLSFEAPSMPNAVVDITPQYVDDKLKSISTNKDLSAFIL</sequence>
<reference key="1">
    <citation type="journal article" date="2002" name="Lancet">
        <title>Genome and virulence determinants of high virulence community-acquired MRSA.</title>
        <authorList>
            <person name="Baba T."/>
            <person name="Takeuchi F."/>
            <person name="Kuroda M."/>
            <person name="Yuzawa H."/>
            <person name="Aoki K."/>
            <person name="Oguchi A."/>
            <person name="Nagai Y."/>
            <person name="Iwama N."/>
            <person name="Asano K."/>
            <person name="Naimi T."/>
            <person name="Kuroda H."/>
            <person name="Cui L."/>
            <person name="Yamamoto K."/>
            <person name="Hiramatsu K."/>
        </authorList>
    </citation>
    <scope>NUCLEOTIDE SEQUENCE [LARGE SCALE GENOMIC DNA]</scope>
    <source>
        <strain>MW2</strain>
    </source>
</reference>
<comment type="function">
    <text evidence="1">ATPase subunit of a proteasome-like degradation complex; this subunit has chaperone activity. The binding of ATP and its subsequent hydrolysis by HslU are essential for unfolding of protein substrates subsequently hydrolyzed by HslV. HslU recognizes the N-terminal part of its protein substrates and unfolds these before they are guided to HslV for hydrolysis.</text>
</comment>
<comment type="subunit">
    <text evidence="1">A double ring-shaped homohexamer of HslV is capped on each side by a ring-shaped HslU homohexamer. The assembly of the HslU/HslV complex is dependent on binding of ATP.</text>
</comment>
<comment type="subcellular location">
    <subcellularLocation>
        <location evidence="1">Cytoplasm</location>
    </subcellularLocation>
</comment>
<comment type="similarity">
    <text evidence="1">Belongs to the ClpX chaperone family. HslU subfamily.</text>
</comment>
<evidence type="ECO:0000255" key="1">
    <source>
        <dbReference type="HAMAP-Rule" id="MF_00249"/>
    </source>
</evidence>
<evidence type="ECO:0000256" key="2">
    <source>
        <dbReference type="SAM" id="MobiDB-lite"/>
    </source>
</evidence>
<proteinExistence type="inferred from homology"/>
<protein>
    <recommendedName>
        <fullName evidence="1">ATP-dependent protease ATPase subunit HslU</fullName>
    </recommendedName>
    <alternativeName>
        <fullName evidence="1">Unfoldase HslU</fullName>
    </alternativeName>
</protein>
<gene>
    <name evidence="1" type="primary">hslU</name>
    <name type="synonym">clpY</name>
    <name type="ordered locus">MW1137</name>
</gene>
<name>HSLU_STAAW</name>
<organism>
    <name type="scientific">Staphylococcus aureus (strain MW2)</name>
    <dbReference type="NCBI Taxonomy" id="196620"/>
    <lineage>
        <taxon>Bacteria</taxon>
        <taxon>Bacillati</taxon>
        <taxon>Bacillota</taxon>
        <taxon>Bacilli</taxon>
        <taxon>Bacillales</taxon>
        <taxon>Staphylococcaceae</taxon>
        <taxon>Staphylococcus</taxon>
    </lineage>
</organism>